<gene>
    <name type="primary">TBCB</name>
    <name type="synonym">CKAP1</name>
</gene>
<accession>Q5E951</accession>
<accession>Q3ZCC1</accession>
<dbReference type="EMBL" id="BT021069">
    <property type="protein sequence ID" value="AAX09086.1"/>
    <property type="molecule type" value="mRNA"/>
</dbReference>
<dbReference type="EMBL" id="BC102571">
    <property type="protein sequence ID" value="AAI02572.1"/>
    <property type="molecule type" value="mRNA"/>
</dbReference>
<dbReference type="RefSeq" id="NP_001014939.1">
    <property type="nucleotide sequence ID" value="NM_001014939.1"/>
</dbReference>
<dbReference type="SMR" id="Q5E951"/>
<dbReference type="FunCoup" id="Q5E951">
    <property type="interactions" value="3660"/>
</dbReference>
<dbReference type="STRING" id="9913.ENSBTAP00000019973"/>
<dbReference type="PaxDb" id="9913-ENSBTAP00000019973"/>
<dbReference type="PeptideAtlas" id="Q5E951"/>
<dbReference type="GeneID" id="530447"/>
<dbReference type="KEGG" id="bta:530447"/>
<dbReference type="CTD" id="1155"/>
<dbReference type="VEuPathDB" id="HostDB:ENSBTAG00000015004"/>
<dbReference type="eggNOG" id="KOG3206">
    <property type="taxonomic scope" value="Eukaryota"/>
</dbReference>
<dbReference type="HOGENOM" id="CLU_067577_2_0_1"/>
<dbReference type="InParanoid" id="Q5E951"/>
<dbReference type="OMA" id="DQYEQRT"/>
<dbReference type="OrthoDB" id="5295208at2759"/>
<dbReference type="TreeFam" id="TF313444"/>
<dbReference type="Proteomes" id="UP000009136">
    <property type="component" value="Chromosome 18"/>
</dbReference>
<dbReference type="Bgee" id="ENSBTAG00000015004">
    <property type="expression patterns" value="Expressed in spermatocyte and 104 other cell types or tissues"/>
</dbReference>
<dbReference type="GO" id="GO:0005938">
    <property type="term" value="C:cell cortex"/>
    <property type="evidence" value="ECO:0000318"/>
    <property type="project" value="GO_Central"/>
</dbReference>
<dbReference type="GO" id="GO:0005737">
    <property type="term" value="C:cytoplasm"/>
    <property type="evidence" value="ECO:0000250"/>
    <property type="project" value="UniProtKB"/>
</dbReference>
<dbReference type="GO" id="GO:0005829">
    <property type="term" value="C:cytosol"/>
    <property type="evidence" value="ECO:0000304"/>
    <property type="project" value="Reactome"/>
</dbReference>
<dbReference type="GO" id="GO:0035371">
    <property type="term" value="C:microtubule plus-end"/>
    <property type="evidence" value="ECO:0000318"/>
    <property type="project" value="GO_Central"/>
</dbReference>
<dbReference type="GO" id="GO:0005634">
    <property type="term" value="C:nucleus"/>
    <property type="evidence" value="ECO:0000318"/>
    <property type="project" value="GO_Central"/>
</dbReference>
<dbReference type="GO" id="GO:0043014">
    <property type="term" value="F:alpha-tubulin binding"/>
    <property type="evidence" value="ECO:0007669"/>
    <property type="project" value="InterPro"/>
</dbReference>
<dbReference type="GO" id="GO:0051010">
    <property type="term" value="F:microtubule plus-end binding"/>
    <property type="evidence" value="ECO:0000318"/>
    <property type="project" value="GO_Central"/>
</dbReference>
<dbReference type="GO" id="GO:0030154">
    <property type="term" value="P:cell differentiation"/>
    <property type="evidence" value="ECO:0007669"/>
    <property type="project" value="UniProtKB-KW"/>
</dbReference>
<dbReference type="GO" id="GO:0031122">
    <property type="term" value="P:cytoplasmic microtubule organization"/>
    <property type="evidence" value="ECO:0000318"/>
    <property type="project" value="GO_Central"/>
</dbReference>
<dbReference type="GO" id="GO:0007399">
    <property type="term" value="P:nervous system development"/>
    <property type="evidence" value="ECO:0007669"/>
    <property type="project" value="UniProtKB-KW"/>
</dbReference>
<dbReference type="GO" id="GO:0007023">
    <property type="term" value="P:post-chaperonin tubulin folding pathway"/>
    <property type="evidence" value="ECO:0007669"/>
    <property type="project" value="InterPro"/>
</dbReference>
<dbReference type="GO" id="GO:0007021">
    <property type="term" value="P:tubulin complex assembly"/>
    <property type="evidence" value="ECO:0007669"/>
    <property type="project" value="InterPro"/>
</dbReference>
<dbReference type="CDD" id="cd01789">
    <property type="entry name" value="Ubl_TBCB"/>
    <property type="match status" value="1"/>
</dbReference>
<dbReference type="FunFam" id="3.10.20.90:FF:000217">
    <property type="entry name" value="Tubulin folding cofactor B"/>
    <property type="match status" value="1"/>
</dbReference>
<dbReference type="FunFam" id="2.30.30.190:FF:000013">
    <property type="entry name" value="Tubulin-folding cofactor B"/>
    <property type="match status" value="1"/>
</dbReference>
<dbReference type="Gene3D" id="2.30.30.190">
    <property type="entry name" value="CAP Gly-rich-like domain"/>
    <property type="match status" value="1"/>
</dbReference>
<dbReference type="Gene3D" id="3.10.20.90">
    <property type="entry name" value="Phosphatidylinositol 3-kinase Catalytic Subunit, Chain A, domain 1"/>
    <property type="match status" value="1"/>
</dbReference>
<dbReference type="InterPro" id="IPR036859">
    <property type="entry name" value="CAP-Gly_dom_sf"/>
</dbReference>
<dbReference type="InterPro" id="IPR000938">
    <property type="entry name" value="CAP-Gly_domain"/>
</dbReference>
<dbReference type="InterPro" id="IPR045172">
    <property type="entry name" value="TBCB_Ubl"/>
</dbReference>
<dbReference type="InterPro" id="IPR000626">
    <property type="entry name" value="Ubiquitin-like_dom"/>
</dbReference>
<dbReference type="InterPro" id="IPR029071">
    <property type="entry name" value="Ubiquitin-like_domsf"/>
</dbReference>
<dbReference type="PANTHER" id="PTHR18916">
    <property type="entry name" value="DYNACTIN 1-RELATED MICROTUBULE-BINDING"/>
    <property type="match status" value="1"/>
</dbReference>
<dbReference type="PANTHER" id="PTHR18916:SF85">
    <property type="entry name" value="TUBULIN-FOLDING COFACTOR B"/>
    <property type="match status" value="1"/>
</dbReference>
<dbReference type="Pfam" id="PF01302">
    <property type="entry name" value="CAP_GLY"/>
    <property type="match status" value="1"/>
</dbReference>
<dbReference type="Pfam" id="PF14560">
    <property type="entry name" value="Ubiquitin_2"/>
    <property type="match status" value="1"/>
</dbReference>
<dbReference type="SMART" id="SM01052">
    <property type="entry name" value="CAP_GLY"/>
    <property type="match status" value="1"/>
</dbReference>
<dbReference type="SUPFAM" id="SSF74924">
    <property type="entry name" value="Cap-Gly domain"/>
    <property type="match status" value="1"/>
</dbReference>
<dbReference type="SUPFAM" id="SSF54236">
    <property type="entry name" value="Ubiquitin-like"/>
    <property type="match status" value="1"/>
</dbReference>
<dbReference type="PROSITE" id="PS00845">
    <property type="entry name" value="CAP_GLY_1"/>
    <property type="match status" value="1"/>
</dbReference>
<dbReference type="PROSITE" id="PS50245">
    <property type="entry name" value="CAP_GLY_2"/>
    <property type="match status" value="1"/>
</dbReference>
<protein>
    <recommendedName>
        <fullName>Tubulin-folding cofactor B</fullName>
    </recommendedName>
    <alternativeName>
        <fullName>Cytoskeleton-associated protein 1</fullName>
    </alternativeName>
    <alternativeName>
        <fullName>Cytoskeleton-associated protein CKAPI</fullName>
    </alternativeName>
    <alternativeName>
        <fullName>Tubulin-specific chaperone B</fullName>
    </alternativeName>
</protein>
<organism>
    <name type="scientific">Bos taurus</name>
    <name type="common">Bovine</name>
    <dbReference type="NCBI Taxonomy" id="9913"/>
    <lineage>
        <taxon>Eukaryota</taxon>
        <taxon>Metazoa</taxon>
        <taxon>Chordata</taxon>
        <taxon>Craniata</taxon>
        <taxon>Vertebrata</taxon>
        <taxon>Euteleostomi</taxon>
        <taxon>Mammalia</taxon>
        <taxon>Eutheria</taxon>
        <taxon>Laurasiatheria</taxon>
        <taxon>Artiodactyla</taxon>
        <taxon>Ruminantia</taxon>
        <taxon>Pecora</taxon>
        <taxon>Bovidae</taxon>
        <taxon>Bovinae</taxon>
        <taxon>Bos</taxon>
    </lineage>
</organism>
<proteinExistence type="evidence at transcript level"/>
<sequence length="244" mass="27518">MEVTGLSAPTVNVFISSSLNSFRSQKRYSRSLTVAEFKCKLQLVVGSPASCMELELYGPDDKFCCKLDQDDALLGSYPVDDGCRIHVIDHSGARLGEYEDISKVEKYEISQEAYEQRQDSIRSFLKRNKLGRFNEEERAQQEAENSQRLIEEEAQASTIPVGSRCEVRTPGQPPRRGTVMYVGLTDFKPGYWIGIRYDEPLGKNDGSVNGKRYFECQAKYGAFVKPSVVTVGDFPEEDYGLDEM</sequence>
<feature type="chain" id="PRO_0000083533" description="Tubulin-folding cofactor B">
    <location>
        <begin position="1"/>
        <end position="244"/>
    </location>
</feature>
<feature type="domain" description="CAP-Gly" evidence="3">
    <location>
        <begin position="183"/>
        <end position="225"/>
    </location>
</feature>
<feature type="modified residue" description="N-acetylmethionine" evidence="1">
    <location>
        <position position="1"/>
    </location>
</feature>
<feature type="modified residue" description="Phosphotyrosine" evidence="1">
    <location>
        <position position="98"/>
    </location>
</feature>
<feature type="modified residue" description="Phosphoserine" evidence="1">
    <location>
        <position position="110"/>
    </location>
</feature>
<feature type="modified residue" description="N6-acetyllysine" evidence="1">
    <location>
        <position position="219"/>
    </location>
</feature>
<keyword id="KW-0007">Acetylation</keyword>
<keyword id="KW-0143">Chaperone</keyword>
<keyword id="KW-0963">Cytoplasm</keyword>
<keyword id="KW-0206">Cytoskeleton</keyword>
<keyword id="KW-0217">Developmental protein</keyword>
<keyword id="KW-0221">Differentiation</keyword>
<keyword id="KW-0493">Microtubule</keyword>
<keyword id="KW-0524">Neurogenesis</keyword>
<keyword id="KW-0597">Phosphoprotein</keyword>
<keyword id="KW-1185">Reference proteome</keyword>
<keyword id="KW-0832">Ubl conjugation</keyword>
<comment type="function">
    <text evidence="1 2">Binds to alpha-tubulin folding intermediates after their interaction with cytosolic chaperonin in the pathway leading from newly synthesized tubulin to properly folded heterodimer. Involved in regulation of tubulin heterodimer dissociation. May function as a negative regulator of axonal growth.</text>
</comment>
<comment type="subunit">
    <text evidence="1 2">Supercomplex made of cofactors A to E. Cofactors A and D function by capturing and stabilizing tubulin in a quasi-native conformation. Cofactor E binds to the cofactor D-tubulin complex; interaction with cofactor C then causes the release of tubulin polypeptides that are committed to the native state. Cofactors B and E can form a heterodimer which binds to alpha-tubulin and enhances their ability to dissociate tubulin heterodimers. Interacts with GAN. Interacts with DCTN1.</text>
</comment>
<comment type="subcellular location">
    <subcellularLocation>
        <location evidence="1">Cytoplasm</location>
    </subcellularLocation>
    <subcellularLocation>
        <location evidence="1">Cytoplasm</location>
        <location evidence="1">Cytoskeleton</location>
    </subcellularLocation>
    <text evidence="1">Colocalizes with microtubules. In differentiated neurons, located in the cytoplasm. In differentiating neurons, accumulates at the growth cone.</text>
</comment>
<comment type="PTM">
    <text evidence="1">Ubiquitinated in the presence of GAN which targets it for degradation by the proteasome.</text>
</comment>
<comment type="PTM">
    <text evidence="1">Phosphorylation by PAK1 is required for normal function.</text>
</comment>
<comment type="similarity">
    <text evidence="4">Belongs to the TBCB family.</text>
</comment>
<evidence type="ECO:0000250" key="1">
    <source>
        <dbReference type="UniProtKB" id="Q99426"/>
    </source>
</evidence>
<evidence type="ECO:0000250" key="2">
    <source>
        <dbReference type="UniProtKB" id="Q9D1E6"/>
    </source>
</evidence>
<evidence type="ECO:0000255" key="3">
    <source>
        <dbReference type="PROSITE-ProRule" id="PRU00045"/>
    </source>
</evidence>
<evidence type="ECO:0000305" key="4"/>
<reference key="1">
    <citation type="journal article" date="2005" name="BMC Genomics">
        <title>Characterization of 954 bovine full-CDS cDNA sequences.</title>
        <authorList>
            <person name="Harhay G.P."/>
            <person name="Sonstegard T.S."/>
            <person name="Keele J.W."/>
            <person name="Heaton M.P."/>
            <person name="Clawson M.L."/>
            <person name="Snelling W.M."/>
            <person name="Wiedmann R.T."/>
            <person name="Van Tassell C.P."/>
            <person name="Smith T.P.L."/>
        </authorList>
    </citation>
    <scope>NUCLEOTIDE SEQUENCE [LARGE SCALE MRNA]</scope>
</reference>
<reference key="2">
    <citation type="submission" date="2005-08" db="EMBL/GenBank/DDBJ databases">
        <authorList>
            <consortium name="NIH - Mammalian Gene Collection (MGC) project"/>
        </authorList>
    </citation>
    <scope>NUCLEOTIDE SEQUENCE [LARGE SCALE MRNA]</scope>
    <source>
        <strain>Crossbred X Angus</strain>
        <tissue>Ileum</tissue>
    </source>
</reference>
<name>TBCB_BOVIN</name>